<sequence length="62" mass="6847">MLVLTRKVGESLLIGDDIEITVLSVRGNQVKLGVNAPKNIVVHREEIYHQIKALADNIPESV</sequence>
<reference key="1">
    <citation type="submission" date="2000-08" db="EMBL/GenBank/DDBJ databases">
        <title>Haemophilus ducreyi strain Hd9 strain produces a truncated lipooligosaccharide due to a mutation in UDP-glucose pyrophosphorylase (galU).</title>
        <authorList>
            <person name="Sun S."/>
            <person name="Gibson B.W."/>
            <person name="Campagnari A.A."/>
            <person name="Munson R.S. Jr."/>
        </authorList>
    </citation>
    <scope>NUCLEOTIDE SEQUENCE [GENOMIC DNA]</scope>
</reference>
<reference key="2">
    <citation type="submission" date="2003-06" db="EMBL/GenBank/DDBJ databases">
        <title>The complete genome sequence of Haemophilus ducreyi.</title>
        <authorList>
            <person name="Munson R.S. Jr."/>
            <person name="Ray W.C."/>
            <person name="Mahairas G."/>
            <person name="Sabo P."/>
            <person name="Mungur R."/>
            <person name="Johnson L."/>
            <person name="Nguyen D."/>
            <person name="Wang J."/>
            <person name="Forst C."/>
            <person name="Hood L."/>
        </authorList>
    </citation>
    <scope>NUCLEOTIDE SEQUENCE [LARGE SCALE GENOMIC DNA]</scope>
    <source>
        <strain>35000HP / ATCC 700724</strain>
    </source>
</reference>
<feature type="chain" id="PRO_0000177067" description="Translational regulator CsrA">
    <location>
        <begin position="1"/>
        <end position="62"/>
    </location>
</feature>
<keyword id="KW-0010">Activator</keyword>
<keyword id="KW-0963">Cytoplasm</keyword>
<keyword id="KW-1185">Reference proteome</keyword>
<keyword id="KW-0678">Repressor</keyword>
<keyword id="KW-0694">RNA-binding</keyword>
<keyword id="KW-0810">Translation regulation</keyword>
<dbReference type="EMBL" id="AF297520">
    <property type="protein sequence ID" value="AAG23690.1"/>
    <property type="molecule type" value="Genomic_DNA"/>
</dbReference>
<dbReference type="EMBL" id="AE017143">
    <property type="protein sequence ID" value="AAP96236.1"/>
    <property type="molecule type" value="Genomic_DNA"/>
</dbReference>
<dbReference type="RefSeq" id="WP_010945285.1">
    <property type="nucleotide sequence ID" value="NC_002940.2"/>
</dbReference>
<dbReference type="SMR" id="Q9F665"/>
<dbReference type="STRING" id="233412.HD_1430"/>
<dbReference type="GeneID" id="60732772"/>
<dbReference type="KEGG" id="hdu:HD_1430"/>
<dbReference type="eggNOG" id="COG1551">
    <property type="taxonomic scope" value="Bacteria"/>
</dbReference>
<dbReference type="HOGENOM" id="CLU_164837_2_1_6"/>
<dbReference type="OrthoDB" id="9809061at2"/>
<dbReference type="Proteomes" id="UP000001022">
    <property type="component" value="Chromosome"/>
</dbReference>
<dbReference type="GO" id="GO:0005829">
    <property type="term" value="C:cytosol"/>
    <property type="evidence" value="ECO:0007669"/>
    <property type="project" value="TreeGrafter"/>
</dbReference>
<dbReference type="GO" id="GO:0048027">
    <property type="term" value="F:mRNA 5'-UTR binding"/>
    <property type="evidence" value="ECO:0007669"/>
    <property type="project" value="UniProtKB-UniRule"/>
</dbReference>
<dbReference type="GO" id="GO:0006402">
    <property type="term" value="P:mRNA catabolic process"/>
    <property type="evidence" value="ECO:0007669"/>
    <property type="project" value="InterPro"/>
</dbReference>
<dbReference type="GO" id="GO:0045947">
    <property type="term" value="P:negative regulation of translational initiation"/>
    <property type="evidence" value="ECO:0007669"/>
    <property type="project" value="UniProtKB-UniRule"/>
</dbReference>
<dbReference type="GO" id="GO:0045948">
    <property type="term" value="P:positive regulation of translational initiation"/>
    <property type="evidence" value="ECO:0007669"/>
    <property type="project" value="UniProtKB-UniRule"/>
</dbReference>
<dbReference type="GO" id="GO:0006109">
    <property type="term" value="P:regulation of carbohydrate metabolic process"/>
    <property type="evidence" value="ECO:0007669"/>
    <property type="project" value="UniProtKB-UniRule"/>
</dbReference>
<dbReference type="FunFam" id="2.60.40.4380:FF:000002">
    <property type="entry name" value="Translational regulator CsrA"/>
    <property type="match status" value="1"/>
</dbReference>
<dbReference type="Gene3D" id="2.60.40.4380">
    <property type="entry name" value="Translational regulator CsrA"/>
    <property type="match status" value="1"/>
</dbReference>
<dbReference type="HAMAP" id="MF_00167">
    <property type="entry name" value="CsrA"/>
    <property type="match status" value="1"/>
</dbReference>
<dbReference type="InterPro" id="IPR003751">
    <property type="entry name" value="CsrA"/>
</dbReference>
<dbReference type="InterPro" id="IPR036107">
    <property type="entry name" value="CsrA_sf"/>
</dbReference>
<dbReference type="NCBIfam" id="TIGR00202">
    <property type="entry name" value="csrA"/>
    <property type="match status" value="1"/>
</dbReference>
<dbReference type="NCBIfam" id="NF002469">
    <property type="entry name" value="PRK01712.1"/>
    <property type="match status" value="1"/>
</dbReference>
<dbReference type="PANTHER" id="PTHR34984">
    <property type="entry name" value="CARBON STORAGE REGULATOR"/>
    <property type="match status" value="1"/>
</dbReference>
<dbReference type="PANTHER" id="PTHR34984:SF1">
    <property type="entry name" value="CARBON STORAGE REGULATOR"/>
    <property type="match status" value="1"/>
</dbReference>
<dbReference type="Pfam" id="PF02599">
    <property type="entry name" value="CsrA"/>
    <property type="match status" value="1"/>
</dbReference>
<dbReference type="SUPFAM" id="SSF117130">
    <property type="entry name" value="CsrA-like"/>
    <property type="match status" value="1"/>
</dbReference>
<accession>Q9F665</accession>
<accession>Q7BY24</accession>
<gene>
    <name evidence="1" type="primary">csrA</name>
    <name type="ordered locus">HD_1430</name>
</gene>
<protein>
    <recommendedName>
        <fullName evidence="1">Translational regulator CsrA</fullName>
    </recommendedName>
    <alternativeName>
        <fullName evidence="1">Carbon storage regulator</fullName>
    </alternativeName>
</protein>
<comment type="function">
    <text evidence="1">A key translational regulator that binds mRNA to regulate translation initiation and/or mRNA stability. Mediates global changes in gene expression, shifting from rapid growth to stress survival by linking envelope stress, the stringent response and the catabolite repression systems. Usually binds in the 5'-UTR; binding at or near the Shine-Dalgarno sequence prevents ribosome-binding, repressing translation, binding elsewhere in the 5'-UTR can activate translation and/or stabilize the mRNA. Its function is antagonized by small RNA(s).</text>
</comment>
<comment type="subunit">
    <text evidence="1">Homodimer; the beta-strands of each monomer intercalate to form a hydrophobic core, while the alpha-helices form wings that extend away from the core.</text>
</comment>
<comment type="subcellular location">
    <subcellularLocation>
        <location evidence="1">Cytoplasm</location>
    </subcellularLocation>
</comment>
<comment type="similarity">
    <text evidence="1">Belongs to the CsrA/RsmA family.</text>
</comment>
<evidence type="ECO:0000255" key="1">
    <source>
        <dbReference type="HAMAP-Rule" id="MF_00167"/>
    </source>
</evidence>
<name>CSRA_HAEDU</name>
<proteinExistence type="inferred from homology"/>
<organism>
    <name type="scientific">Haemophilus ducreyi (strain 35000HP / ATCC 700724)</name>
    <dbReference type="NCBI Taxonomy" id="233412"/>
    <lineage>
        <taxon>Bacteria</taxon>
        <taxon>Pseudomonadati</taxon>
        <taxon>Pseudomonadota</taxon>
        <taxon>Gammaproteobacteria</taxon>
        <taxon>Pasteurellales</taxon>
        <taxon>Pasteurellaceae</taxon>
        <taxon>Haemophilus</taxon>
    </lineage>
</organism>